<organism>
    <name type="scientific">Leifsonia xyli subsp. xyli (strain CTCB07)</name>
    <dbReference type="NCBI Taxonomy" id="281090"/>
    <lineage>
        <taxon>Bacteria</taxon>
        <taxon>Bacillati</taxon>
        <taxon>Actinomycetota</taxon>
        <taxon>Actinomycetes</taxon>
        <taxon>Micrococcales</taxon>
        <taxon>Microbacteriaceae</taxon>
        <taxon>Leifsonia</taxon>
    </lineage>
</organism>
<dbReference type="EC" id="3.6.4.-" evidence="1"/>
<dbReference type="EMBL" id="AE016822">
    <property type="protein sequence ID" value="AAT88931.1"/>
    <property type="molecule type" value="Genomic_DNA"/>
</dbReference>
<dbReference type="RefSeq" id="WP_011185927.1">
    <property type="nucleotide sequence ID" value="NC_006087.1"/>
</dbReference>
<dbReference type="SMR" id="Q6AFB4"/>
<dbReference type="STRING" id="281090.Lxx10770"/>
<dbReference type="KEGG" id="lxx:Lxx10770"/>
<dbReference type="eggNOG" id="COG2255">
    <property type="taxonomic scope" value="Bacteria"/>
</dbReference>
<dbReference type="HOGENOM" id="CLU_055599_1_0_11"/>
<dbReference type="Proteomes" id="UP000001306">
    <property type="component" value="Chromosome"/>
</dbReference>
<dbReference type="GO" id="GO:0005737">
    <property type="term" value="C:cytoplasm"/>
    <property type="evidence" value="ECO:0007669"/>
    <property type="project" value="UniProtKB-SubCell"/>
</dbReference>
<dbReference type="GO" id="GO:0048476">
    <property type="term" value="C:Holliday junction resolvase complex"/>
    <property type="evidence" value="ECO:0007669"/>
    <property type="project" value="UniProtKB-UniRule"/>
</dbReference>
<dbReference type="GO" id="GO:0005524">
    <property type="term" value="F:ATP binding"/>
    <property type="evidence" value="ECO:0007669"/>
    <property type="project" value="UniProtKB-UniRule"/>
</dbReference>
<dbReference type="GO" id="GO:0016887">
    <property type="term" value="F:ATP hydrolysis activity"/>
    <property type="evidence" value="ECO:0007669"/>
    <property type="project" value="InterPro"/>
</dbReference>
<dbReference type="GO" id="GO:0000400">
    <property type="term" value="F:four-way junction DNA binding"/>
    <property type="evidence" value="ECO:0007669"/>
    <property type="project" value="UniProtKB-UniRule"/>
</dbReference>
<dbReference type="GO" id="GO:0009378">
    <property type="term" value="F:four-way junction helicase activity"/>
    <property type="evidence" value="ECO:0007669"/>
    <property type="project" value="InterPro"/>
</dbReference>
<dbReference type="GO" id="GO:0006310">
    <property type="term" value="P:DNA recombination"/>
    <property type="evidence" value="ECO:0007669"/>
    <property type="project" value="UniProtKB-UniRule"/>
</dbReference>
<dbReference type="GO" id="GO:0006281">
    <property type="term" value="P:DNA repair"/>
    <property type="evidence" value="ECO:0007669"/>
    <property type="project" value="UniProtKB-UniRule"/>
</dbReference>
<dbReference type="CDD" id="cd00009">
    <property type="entry name" value="AAA"/>
    <property type="match status" value="1"/>
</dbReference>
<dbReference type="Gene3D" id="1.10.8.60">
    <property type="match status" value="1"/>
</dbReference>
<dbReference type="Gene3D" id="3.40.50.300">
    <property type="entry name" value="P-loop containing nucleotide triphosphate hydrolases"/>
    <property type="match status" value="1"/>
</dbReference>
<dbReference type="Gene3D" id="1.10.10.10">
    <property type="entry name" value="Winged helix-like DNA-binding domain superfamily/Winged helix DNA-binding domain"/>
    <property type="match status" value="1"/>
</dbReference>
<dbReference type="HAMAP" id="MF_00016">
    <property type="entry name" value="DNA_HJ_migration_RuvB"/>
    <property type="match status" value="1"/>
</dbReference>
<dbReference type="InterPro" id="IPR003593">
    <property type="entry name" value="AAA+_ATPase"/>
</dbReference>
<dbReference type="InterPro" id="IPR041445">
    <property type="entry name" value="AAA_lid_4"/>
</dbReference>
<dbReference type="InterPro" id="IPR004605">
    <property type="entry name" value="DNA_helicase_Holl-junc_RuvB"/>
</dbReference>
<dbReference type="InterPro" id="IPR027417">
    <property type="entry name" value="P-loop_NTPase"/>
</dbReference>
<dbReference type="InterPro" id="IPR008824">
    <property type="entry name" value="RuvB-like_N"/>
</dbReference>
<dbReference type="InterPro" id="IPR008823">
    <property type="entry name" value="RuvB_C"/>
</dbReference>
<dbReference type="InterPro" id="IPR036388">
    <property type="entry name" value="WH-like_DNA-bd_sf"/>
</dbReference>
<dbReference type="InterPro" id="IPR036390">
    <property type="entry name" value="WH_DNA-bd_sf"/>
</dbReference>
<dbReference type="NCBIfam" id="NF000868">
    <property type="entry name" value="PRK00080.1"/>
    <property type="match status" value="1"/>
</dbReference>
<dbReference type="NCBIfam" id="TIGR00635">
    <property type="entry name" value="ruvB"/>
    <property type="match status" value="1"/>
</dbReference>
<dbReference type="PANTHER" id="PTHR42848">
    <property type="match status" value="1"/>
</dbReference>
<dbReference type="PANTHER" id="PTHR42848:SF1">
    <property type="entry name" value="HOLLIDAY JUNCTION BRANCH MIGRATION COMPLEX SUBUNIT RUVB"/>
    <property type="match status" value="1"/>
</dbReference>
<dbReference type="Pfam" id="PF17864">
    <property type="entry name" value="AAA_lid_4"/>
    <property type="match status" value="1"/>
</dbReference>
<dbReference type="Pfam" id="PF05491">
    <property type="entry name" value="RuvB_C"/>
    <property type="match status" value="1"/>
</dbReference>
<dbReference type="Pfam" id="PF05496">
    <property type="entry name" value="RuvB_N"/>
    <property type="match status" value="1"/>
</dbReference>
<dbReference type="SMART" id="SM00382">
    <property type="entry name" value="AAA"/>
    <property type="match status" value="1"/>
</dbReference>
<dbReference type="SUPFAM" id="SSF52540">
    <property type="entry name" value="P-loop containing nucleoside triphosphate hydrolases"/>
    <property type="match status" value="1"/>
</dbReference>
<dbReference type="SUPFAM" id="SSF46785">
    <property type="entry name" value="Winged helix' DNA-binding domain"/>
    <property type="match status" value="1"/>
</dbReference>
<reference key="1">
    <citation type="journal article" date="2004" name="Mol. Plant Microbe Interact.">
        <title>The genome sequence of the Gram-positive sugarcane pathogen Leifsonia xyli subsp. xyli.</title>
        <authorList>
            <person name="Monteiro-Vitorello C.B."/>
            <person name="Camargo L.E.A."/>
            <person name="Van Sluys M.A."/>
            <person name="Kitajima J.P."/>
            <person name="Truffi D."/>
            <person name="do Amaral A.M."/>
            <person name="Harakava R."/>
            <person name="de Oliveira J.C.F."/>
            <person name="Wood D."/>
            <person name="de Oliveira M.C."/>
            <person name="Miyaki C.Y."/>
            <person name="Takita M.A."/>
            <person name="da Silva A.C.R."/>
            <person name="Furlan L.R."/>
            <person name="Carraro D.M."/>
            <person name="Camarotte G."/>
            <person name="Almeida N.F. Jr."/>
            <person name="Carrer H."/>
            <person name="Coutinho L.L."/>
            <person name="El-Dorry H.A."/>
            <person name="Ferro M.I.T."/>
            <person name="Gagliardi P.R."/>
            <person name="Giglioti E."/>
            <person name="Goldman M.H.S."/>
            <person name="Goldman G.H."/>
            <person name="Kimura E.T."/>
            <person name="Ferro E.S."/>
            <person name="Kuramae E.E."/>
            <person name="Lemos E.G.M."/>
            <person name="Lemos M.V.F."/>
            <person name="Mauro S.M.Z."/>
            <person name="Machado M.A."/>
            <person name="Marino C.L."/>
            <person name="Menck C.F."/>
            <person name="Nunes L.R."/>
            <person name="Oliveira R.C."/>
            <person name="Pereira G.G."/>
            <person name="Siqueira W."/>
            <person name="de Souza A.A."/>
            <person name="Tsai S.M."/>
            <person name="Zanca A.S."/>
            <person name="Simpson A.J.G."/>
            <person name="Brumbley S.M."/>
            <person name="Setubal J.C."/>
        </authorList>
    </citation>
    <scope>NUCLEOTIDE SEQUENCE [LARGE SCALE GENOMIC DNA]</scope>
    <source>
        <strain>CTCB07</strain>
    </source>
</reference>
<protein>
    <recommendedName>
        <fullName evidence="1">Holliday junction branch migration complex subunit RuvB</fullName>
        <ecNumber evidence="1">3.6.4.-</ecNumber>
    </recommendedName>
</protein>
<sequence length="347" mass="37579">MSDDPTTPELESESESELAFEGALRPRTLAEFVGQAKVRGQLQLLLTAARMQERTADHILLAGPPGLGKTTLAMIVAHESDRPLRLSSGPAIQHAGDLAALLSSLTPGEVLFIDEIHRMARTAEEMLYLAMEDFRIDIMVGKGAGATSIPLDLAPFTLVGATTRSGLLPNPLRDRFGFTAHLEFYDEGELAQVLARAAVMLEFEIDGEALAEIAGRCRGTPRIANRLLRRVRDYALVHGGRADIAAVHAALELYDVNELGLDRLDRAVLHAILERFEGGPVGLNTLAVSVGEEPETIESVVEPFLVRIGLLSRTPRGRVATVAAWRHFGLAAPRQGHSQPPSLMDDL</sequence>
<evidence type="ECO:0000255" key="1">
    <source>
        <dbReference type="HAMAP-Rule" id="MF_00016"/>
    </source>
</evidence>
<name>RUVB_LEIXX</name>
<comment type="function">
    <text evidence="1">The RuvA-RuvB-RuvC complex processes Holliday junction (HJ) DNA during genetic recombination and DNA repair, while the RuvA-RuvB complex plays an important role in the rescue of blocked DNA replication forks via replication fork reversal (RFR). RuvA specifically binds to HJ cruciform DNA, conferring on it an open structure. The RuvB hexamer acts as an ATP-dependent pump, pulling dsDNA into and through the RuvAB complex. RuvB forms 2 homohexamers on either side of HJ DNA bound by 1 or 2 RuvA tetramers; 4 subunits per hexamer contact DNA at a time. Coordinated motions by a converter formed by DNA-disengaged RuvB subunits stimulates ATP hydrolysis and nucleotide exchange. Immobilization of the converter enables RuvB to convert the ATP-contained energy into a lever motion, pulling 2 nucleotides of DNA out of the RuvA tetramer per ATP hydrolyzed, thus driving DNA branch migration. The RuvB motors rotate together with the DNA substrate, which together with the progressing nucleotide cycle form the mechanistic basis for DNA recombination by continuous HJ branch migration. Branch migration allows RuvC to scan DNA until it finds its consensus sequence, where it cleaves and resolves cruciform DNA.</text>
</comment>
<comment type="catalytic activity">
    <reaction evidence="1">
        <text>ATP + H2O = ADP + phosphate + H(+)</text>
        <dbReference type="Rhea" id="RHEA:13065"/>
        <dbReference type="ChEBI" id="CHEBI:15377"/>
        <dbReference type="ChEBI" id="CHEBI:15378"/>
        <dbReference type="ChEBI" id="CHEBI:30616"/>
        <dbReference type="ChEBI" id="CHEBI:43474"/>
        <dbReference type="ChEBI" id="CHEBI:456216"/>
    </reaction>
</comment>
<comment type="subunit">
    <text evidence="1">Homohexamer. Forms an RuvA(8)-RuvB(12)-Holliday junction (HJ) complex. HJ DNA is sandwiched between 2 RuvA tetramers; dsDNA enters through RuvA and exits via RuvB. An RuvB hexamer assembles on each DNA strand where it exits the tetramer. Each RuvB hexamer is contacted by two RuvA subunits (via domain III) on 2 adjacent RuvB subunits; this complex drives branch migration. In the full resolvosome a probable DNA-RuvA(4)-RuvB(12)-RuvC(2) complex forms which resolves the HJ.</text>
</comment>
<comment type="subcellular location">
    <subcellularLocation>
        <location evidence="1">Cytoplasm</location>
    </subcellularLocation>
</comment>
<comment type="domain">
    <text evidence="1">Has 3 domains, the large (RuvB-L) and small ATPase (RuvB-S) domains and the C-terminal head (RuvB-H) domain. The head domain binds DNA, while the ATPase domains jointly bind ATP, ADP or are empty depending on the state of the subunit in the translocation cycle. During a single DNA translocation step the structure of each domain remains the same, but their relative positions change.</text>
</comment>
<comment type="similarity">
    <text evidence="1">Belongs to the RuvB family.</text>
</comment>
<gene>
    <name evidence="1" type="primary">ruvB</name>
    <name type="ordered locus">Lxx10770</name>
</gene>
<feature type="chain" id="PRO_0000165548" description="Holliday junction branch migration complex subunit RuvB">
    <location>
        <begin position="1"/>
        <end position="347"/>
    </location>
</feature>
<feature type="region of interest" description="Large ATPase domain (RuvB-L)" evidence="1">
    <location>
        <begin position="1"/>
        <end position="185"/>
    </location>
</feature>
<feature type="region of interest" description="Small ATPAse domain (RuvB-S)" evidence="1">
    <location>
        <begin position="186"/>
        <end position="255"/>
    </location>
</feature>
<feature type="region of interest" description="Head domain (RuvB-H)" evidence="1">
    <location>
        <begin position="258"/>
        <end position="347"/>
    </location>
</feature>
<feature type="binding site" evidence="1">
    <location>
        <position position="24"/>
    </location>
    <ligand>
        <name>ATP</name>
        <dbReference type="ChEBI" id="CHEBI:30616"/>
    </ligand>
</feature>
<feature type="binding site" evidence="1">
    <location>
        <position position="25"/>
    </location>
    <ligand>
        <name>ATP</name>
        <dbReference type="ChEBI" id="CHEBI:30616"/>
    </ligand>
</feature>
<feature type="binding site" evidence="1">
    <location>
        <position position="66"/>
    </location>
    <ligand>
        <name>ATP</name>
        <dbReference type="ChEBI" id="CHEBI:30616"/>
    </ligand>
</feature>
<feature type="binding site" evidence="1">
    <location>
        <position position="69"/>
    </location>
    <ligand>
        <name>ATP</name>
        <dbReference type="ChEBI" id="CHEBI:30616"/>
    </ligand>
</feature>
<feature type="binding site" evidence="1">
    <location>
        <position position="70"/>
    </location>
    <ligand>
        <name>ATP</name>
        <dbReference type="ChEBI" id="CHEBI:30616"/>
    </ligand>
</feature>
<feature type="binding site" evidence="1">
    <location>
        <position position="70"/>
    </location>
    <ligand>
        <name>Mg(2+)</name>
        <dbReference type="ChEBI" id="CHEBI:18420"/>
    </ligand>
</feature>
<feature type="binding site" evidence="1">
    <location>
        <position position="71"/>
    </location>
    <ligand>
        <name>ATP</name>
        <dbReference type="ChEBI" id="CHEBI:30616"/>
    </ligand>
</feature>
<feature type="binding site" evidence="1">
    <location>
        <begin position="132"/>
        <end position="134"/>
    </location>
    <ligand>
        <name>ATP</name>
        <dbReference type="ChEBI" id="CHEBI:30616"/>
    </ligand>
</feature>
<feature type="binding site" evidence="1">
    <location>
        <position position="175"/>
    </location>
    <ligand>
        <name>ATP</name>
        <dbReference type="ChEBI" id="CHEBI:30616"/>
    </ligand>
</feature>
<feature type="binding site" evidence="1">
    <location>
        <position position="185"/>
    </location>
    <ligand>
        <name>ATP</name>
        <dbReference type="ChEBI" id="CHEBI:30616"/>
    </ligand>
</feature>
<feature type="binding site" evidence="1">
    <location>
        <position position="222"/>
    </location>
    <ligand>
        <name>ATP</name>
        <dbReference type="ChEBI" id="CHEBI:30616"/>
    </ligand>
</feature>
<feature type="binding site" evidence="1">
    <location>
        <position position="313"/>
    </location>
    <ligand>
        <name>DNA</name>
        <dbReference type="ChEBI" id="CHEBI:16991"/>
    </ligand>
</feature>
<feature type="binding site" evidence="1">
    <location>
        <position position="318"/>
    </location>
    <ligand>
        <name>DNA</name>
        <dbReference type="ChEBI" id="CHEBI:16991"/>
    </ligand>
</feature>
<accession>Q6AFB4</accession>
<keyword id="KW-0067">ATP-binding</keyword>
<keyword id="KW-0963">Cytoplasm</keyword>
<keyword id="KW-0227">DNA damage</keyword>
<keyword id="KW-0233">DNA recombination</keyword>
<keyword id="KW-0234">DNA repair</keyword>
<keyword id="KW-0238">DNA-binding</keyword>
<keyword id="KW-0378">Hydrolase</keyword>
<keyword id="KW-0547">Nucleotide-binding</keyword>
<keyword id="KW-1185">Reference proteome</keyword>
<proteinExistence type="inferred from homology"/>